<comment type="function">
    <text evidence="1">Probable lipolytic acyl hydrolase (LAH), an activity which is thought to be involved in the response of tubers to pathogens.</text>
</comment>
<comment type="subcellular location">
    <subcellularLocation>
        <location evidence="1">Vacuole</location>
    </subcellularLocation>
</comment>
<comment type="tissue specificity">
    <text evidence="4">Tuber.</text>
</comment>
<comment type="developmental stage">
    <text evidence="4">Accumulates progressively during tuber formation from stolon.</text>
</comment>
<comment type="domain">
    <text>The nitrogen atoms of the two glycine residues in the GGXR motif define the oxyanion hole, and stabilize the oxyanion that forms during the nucleophilic attack by the catalytic serine during substrate cleavage.</text>
</comment>
<comment type="miscellaneous">
    <text>Patatin have a dual role as a somatic storage protein and as an enzyme involved in host resistance.</text>
</comment>
<comment type="similarity">
    <text evidence="5">Belongs to the patatin family.</text>
</comment>
<feature type="signal peptide" evidence="2">
    <location>
        <begin position="1"/>
        <end position="23"/>
    </location>
</feature>
<feature type="chain" id="PRO_0000296699" description="Patatin-14">
    <location>
        <begin position="24"/>
        <end position="386"/>
    </location>
</feature>
<feature type="domain" description="PNPLA" evidence="3">
    <location>
        <begin position="32"/>
        <end position="229"/>
    </location>
</feature>
<feature type="coiled-coil region" evidence="2">
    <location>
        <begin position="321"/>
        <end position="381"/>
    </location>
</feature>
<feature type="short sequence motif" description="GXGXXG" evidence="3">
    <location>
        <begin position="36"/>
        <end position="41"/>
    </location>
</feature>
<feature type="short sequence motif" description="GXSXG" evidence="3">
    <location>
        <begin position="75"/>
        <end position="79"/>
    </location>
</feature>
<feature type="short sequence motif" description="DGA/G" evidence="3">
    <location>
        <begin position="215"/>
        <end position="217"/>
    </location>
</feature>
<feature type="active site" description="Nucleophile" evidence="3">
    <location>
        <position position="77"/>
    </location>
</feature>
<feature type="active site" description="Proton acceptor" evidence="3">
    <location>
        <position position="215"/>
    </location>
</feature>
<feature type="glycosylation site" description="N-linked (GlcNAc...) asparagine" evidence="2">
    <location>
        <position position="115"/>
    </location>
</feature>
<keyword id="KW-0175">Coiled coil</keyword>
<keyword id="KW-0325">Glycoprotein</keyword>
<keyword id="KW-0378">Hydrolase</keyword>
<keyword id="KW-0442">Lipid degradation</keyword>
<keyword id="KW-0443">Lipid metabolism</keyword>
<keyword id="KW-1185">Reference proteome</keyword>
<keyword id="KW-0732">Signal</keyword>
<keyword id="KW-0758">Storage protein</keyword>
<keyword id="KW-0926">Vacuole</keyword>
<sequence length="386" mass="42625">MATTKSFLILFFMILATTSSTCAKLEEMVTVLSIDGGGIKGIIPAIILEFLEGQLQEVDNNKDARLADYFDVIGGTSTGGLLTAMITTPNENNRPFAAAKDIVPFYFEHGPHIFNYSGSIIGPMYDGKYLLQVLQEKLGETRVHQALTEVAISSFDIKTNKPVIFTKSNLAKSPELDAKMYDICYSTAAAPIYFPPHYFITHTSNGDIYEFNLVDGGVATVGDPALLSLSVATRLAQEDPAFSSIKSLDYKQMLLLSLGTGTNSEFDKTYTAQEAAKWGPLRWMLAIQQMTNAASSYMTDYYISTVFQARHSQNNYLRVQENALTGTTTEMDDASEANMELLVQVGETLLKKPVSKDSPETYEEALKRFAKLLSDRKKLRASKASY</sequence>
<reference key="1">
    <citation type="journal article" date="2006" name="Genetics">
        <title>Structural diversity and differential transcription of the patatin multicopy gene family during potato tuber development.</title>
        <authorList>
            <person name="Stupar R.M."/>
            <person name="Beaubien K.A."/>
            <person name="Jin W."/>
            <person name="Song J."/>
            <person name="Lee M.-K."/>
            <person name="Wu C."/>
            <person name="Zhang H.-B."/>
            <person name="Han B."/>
            <person name="Jiang J."/>
        </authorList>
    </citation>
    <scope>NUCLEOTIDE SEQUENCE [MRNA]</scope>
    <scope>DEVELOPMENTAL STAGE</scope>
    <scope>TISSUE SPECIFICITY</scope>
    <source>
        <strain>cv. Kennebec</strain>
    </source>
</reference>
<name>PAT14_SOLTU</name>
<accession>Q2MY37</accession>
<evidence type="ECO:0000250" key="1"/>
<evidence type="ECO:0000255" key="2"/>
<evidence type="ECO:0000255" key="3">
    <source>
        <dbReference type="PROSITE-ProRule" id="PRU01161"/>
    </source>
</evidence>
<evidence type="ECO:0000269" key="4">
    <source>
    </source>
</evidence>
<evidence type="ECO:0000305" key="5"/>
<protein>
    <recommendedName>
        <fullName>Patatin-14</fullName>
        <ecNumber>3.1.1.-</ecNumber>
    </recommendedName>
</protein>
<proteinExistence type="evidence at transcript level"/>
<dbReference type="EC" id="3.1.1.-"/>
<dbReference type="EMBL" id="DQ274501">
    <property type="protein sequence ID" value="ABC55701.1"/>
    <property type="molecule type" value="mRNA"/>
</dbReference>
<dbReference type="SMR" id="Q2MY37"/>
<dbReference type="InParanoid" id="Q2MY37"/>
<dbReference type="Proteomes" id="UP000011115">
    <property type="component" value="Unassembled WGS sequence"/>
</dbReference>
<dbReference type="ExpressionAtlas" id="Q2MY37">
    <property type="expression patterns" value="baseline"/>
</dbReference>
<dbReference type="GO" id="GO:0005773">
    <property type="term" value="C:vacuole"/>
    <property type="evidence" value="ECO:0007669"/>
    <property type="project" value="UniProtKB-SubCell"/>
</dbReference>
<dbReference type="GO" id="GO:0047372">
    <property type="term" value="F:monoacylglycerol lipase activity"/>
    <property type="evidence" value="ECO:0000318"/>
    <property type="project" value="GO_Central"/>
</dbReference>
<dbReference type="GO" id="GO:0045735">
    <property type="term" value="F:nutrient reservoir activity"/>
    <property type="evidence" value="ECO:0007669"/>
    <property type="project" value="UniProtKB-KW"/>
</dbReference>
<dbReference type="GO" id="GO:0004620">
    <property type="term" value="F:phospholipase activity"/>
    <property type="evidence" value="ECO:0000318"/>
    <property type="project" value="GO_Central"/>
</dbReference>
<dbReference type="GO" id="GO:0016042">
    <property type="term" value="P:lipid catabolic process"/>
    <property type="evidence" value="ECO:0007669"/>
    <property type="project" value="UniProtKB-KW"/>
</dbReference>
<dbReference type="Gene3D" id="3.40.1090.10">
    <property type="entry name" value="Cytosolic phospholipase A2 catalytic domain"/>
    <property type="match status" value="1"/>
</dbReference>
<dbReference type="InterPro" id="IPR016035">
    <property type="entry name" value="Acyl_Trfase/lysoPLipase"/>
</dbReference>
<dbReference type="InterPro" id="IPR002641">
    <property type="entry name" value="PNPLA_dom"/>
</dbReference>
<dbReference type="PANTHER" id="PTHR32176:SF85">
    <property type="entry name" value="PATATIN GROUP D-2"/>
    <property type="match status" value="1"/>
</dbReference>
<dbReference type="PANTHER" id="PTHR32176">
    <property type="entry name" value="XYLOSE ISOMERASE"/>
    <property type="match status" value="1"/>
</dbReference>
<dbReference type="Pfam" id="PF01734">
    <property type="entry name" value="Patatin"/>
    <property type="match status" value="1"/>
</dbReference>
<dbReference type="SUPFAM" id="SSF52151">
    <property type="entry name" value="FabD/lysophospholipase-like"/>
    <property type="match status" value="1"/>
</dbReference>
<dbReference type="PROSITE" id="PS51635">
    <property type="entry name" value="PNPLA"/>
    <property type="match status" value="1"/>
</dbReference>
<organism>
    <name type="scientific">Solanum tuberosum</name>
    <name type="common">Potato</name>
    <dbReference type="NCBI Taxonomy" id="4113"/>
    <lineage>
        <taxon>Eukaryota</taxon>
        <taxon>Viridiplantae</taxon>
        <taxon>Streptophyta</taxon>
        <taxon>Embryophyta</taxon>
        <taxon>Tracheophyta</taxon>
        <taxon>Spermatophyta</taxon>
        <taxon>Magnoliopsida</taxon>
        <taxon>eudicotyledons</taxon>
        <taxon>Gunneridae</taxon>
        <taxon>Pentapetalae</taxon>
        <taxon>asterids</taxon>
        <taxon>lamiids</taxon>
        <taxon>Solanales</taxon>
        <taxon>Solanaceae</taxon>
        <taxon>Solanoideae</taxon>
        <taxon>Solaneae</taxon>
        <taxon>Solanum</taxon>
    </lineage>
</organism>